<feature type="chain" id="PRO_0000142280" description="Imidazole glycerol phosphate synthase subunit HisF">
    <location>
        <begin position="1"/>
        <end position="272"/>
    </location>
</feature>
<feature type="active site" evidence="1">
    <location>
        <position position="12"/>
    </location>
</feature>
<feature type="active site" evidence="1">
    <location>
        <position position="131"/>
    </location>
</feature>
<dbReference type="EC" id="4.3.2.10" evidence="1"/>
<dbReference type="EMBL" id="AE009439">
    <property type="protein sequence ID" value="AAM01390.1"/>
    <property type="molecule type" value="Genomic_DNA"/>
</dbReference>
<dbReference type="RefSeq" id="WP_011018545.1">
    <property type="nucleotide sequence ID" value="NC_003551.1"/>
</dbReference>
<dbReference type="SMR" id="Q8TYW8"/>
<dbReference type="FunCoup" id="Q8TYW8">
    <property type="interactions" value="191"/>
</dbReference>
<dbReference type="STRING" id="190192.MK0173"/>
<dbReference type="PaxDb" id="190192-MK0173"/>
<dbReference type="EnsemblBacteria" id="AAM01390">
    <property type="protein sequence ID" value="AAM01390"/>
    <property type="gene ID" value="MK0173"/>
</dbReference>
<dbReference type="GeneID" id="1477476"/>
<dbReference type="KEGG" id="mka:MK0173"/>
<dbReference type="PATRIC" id="fig|190192.8.peg.172"/>
<dbReference type="HOGENOM" id="CLU_048577_4_0_2"/>
<dbReference type="InParanoid" id="Q8TYW8"/>
<dbReference type="OrthoDB" id="6261at2157"/>
<dbReference type="UniPathway" id="UPA00031">
    <property type="reaction ID" value="UER00010"/>
</dbReference>
<dbReference type="Proteomes" id="UP000001826">
    <property type="component" value="Chromosome"/>
</dbReference>
<dbReference type="GO" id="GO:0005737">
    <property type="term" value="C:cytoplasm"/>
    <property type="evidence" value="ECO:0007669"/>
    <property type="project" value="UniProtKB-SubCell"/>
</dbReference>
<dbReference type="GO" id="GO:0000107">
    <property type="term" value="F:imidazoleglycerol-phosphate synthase activity"/>
    <property type="evidence" value="ECO:0007669"/>
    <property type="project" value="UniProtKB-UniRule"/>
</dbReference>
<dbReference type="GO" id="GO:0016829">
    <property type="term" value="F:lyase activity"/>
    <property type="evidence" value="ECO:0007669"/>
    <property type="project" value="UniProtKB-KW"/>
</dbReference>
<dbReference type="GO" id="GO:0000105">
    <property type="term" value="P:L-histidine biosynthetic process"/>
    <property type="evidence" value="ECO:0007669"/>
    <property type="project" value="UniProtKB-UniRule"/>
</dbReference>
<dbReference type="CDD" id="cd04731">
    <property type="entry name" value="HisF"/>
    <property type="match status" value="1"/>
</dbReference>
<dbReference type="FunFam" id="3.20.20.70:FF:000006">
    <property type="entry name" value="Imidazole glycerol phosphate synthase subunit HisF"/>
    <property type="match status" value="1"/>
</dbReference>
<dbReference type="Gene3D" id="3.20.20.70">
    <property type="entry name" value="Aldolase class I"/>
    <property type="match status" value="1"/>
</dbReference>
<dbReference type="HAMAP" id="MF_01013">
    <property type="entry name" value="HisF"/>
    <property type="match status" value="1"/>
</dbReference>
<dbReference type="InterPro" id="IPR013785">
    <property type="entry name" value="Aldolase_TIM"/>
</dbReference>
<dbReference type="InterPro" id="IPR006062">
    <property type="entry name" value="His_biosynth"/>
</dbReference>
<dbReference type="InterPro" id="IPR004651">
    <property type="entry name" value="HisF"/>
</dbReference>
<dbReference type="InterPro" id="IPR050064">
    <property type="entry name" value="IGPS_HisA/HisF"/>
</dbReference>
<dbReference type="InterPro" id="IPR011060">
    <property type="entry name" value="RibuloseP-bd_barrel"/>
</dbReference>
<dbReference type="NCBIfam" id="TIGR00735">
    <property type="entry name" value="hisF"/>
    <property type="match status" value="1"/>
</dbReference>
<dbReference type="PANTHER" id="PTHR21235:SF2">
    <property type="entry name" value="IMIDAZOLE GLYCEROL PHOSPHATE SYNTHASE HISHF"/>
    <property type="match status" value="1"/>
</dbReference>
<dbReference type="PANTHER" id="PTHR21235">
    <property type="entry name" value="IMIDAZOLE GLYCEROL PHOSPHATE SYNTHASE SUBUNIT HISF/H IGP SYNTHASE SUBUNIT HISF/H"/>
    <property type="match status" value="1"/>
</dbReference>
<dbReference type="Pfam" id="PF00977">
    <property type="entry name" value="His_biosynth"/>
    <property type="match status" value="1"/>
</dbReference>
<dbReference type="SUPFAM" id="SSF51366">
    <property type="entry name" value="Ribulose-phoshate binding barrel"/>
    <property type="match status" value="1"/>
</dbReference>
<protein>
    <recommendedName>
        <fullName evidence="1">Imidazole glycerol phosphate synthase subunit HisF</fullName>
        <ecNumber evidence="1">4.3.2.10</ecNumber>
    </recommendedName>
    <alternativeName>
        <fullName evidence="1">IGP synthase cyclase subunit</fullName>
    </alternativeName>
    <alternativeName>
        <fullName evidence="1">IGP synthase subunit HisF</fullName>
    </alternativeName>
    <alternativeName>
        <fullName evidence="1">ImGP synthase subunit HisF</fullName>
        <shortName evidence="1">IGPS subunit HisF</shortName>
    </alternativeName>
</protein>
<name>HIS6_METKA</name>
<sequence>MALAKRIIPCLDVKDGRVVKGVRFRGLRDAGDPAELAHHYYRHGADEIVFLDISASPEGRRLMVDVVRRTAEKVFIPMTVGGGISDVEDFRRALTAGADKVSVNTAAVENPELISEAADIFGSQCVVVAIDAKREPLKPEHEHVADHIFSNDDGEYWFRVYVRGGREPVDLDAITWAKRVEELGAGEILLTSIDADGTQEGYDIELTREVCNAVSIPVIASGGCGHPKHMVEVFKEADADAALAASIFHYGKFTIEEVKEHLAERGVRVRQC</sequence>
<evidence type="ECO:0000255" key="1">
    <source>
        <dbReference type="HAMAP-Rule" id="MF_01013"/>
    </source>
</evidence>
<reference key="1">
    <citation type="journal article" date="2002" name="Proc. Natl. Acad. Sci. U.S.A.">
        <title>The complete genome of hyperthermophile Methanopyrus kandleri AV19 and monophyly of archaeal methanogens.</title>
        <authorList>
            <person name="Slesarev A.I."/>
            <person name="Mezhevaya K.V."/>
            <person name="Makarova K.S."/>
            <person name="Polushin N.N."/>
            <person name="Shcherbinina O.V."/>
            <person name="Shakhova V.V."/>
            <person name="Belova G.I."/>
            <person name="Aravind L."/>
            <person name="Natale D.A."/>
            <person name="Rogozin I.B."/>
            <person name="Tatusov R.L."/>
            <person name="Wolf Y.I."/>
            <person name="Stetter K.O."/>
            <person name="Malykh A.G."/>
            <person name="Koonin E.V."/>
            <person name="Kozyavkin S.A."/>
        </authorList>
    </citation>
    <scope>NUCLEOTIDE SEQUENCE [LARGE SCALE GENOMIC DNA]</scope>
    <source>
        <strain>AV19 / DSM 6324 / JCM 9639 / NBRC 100938</strain>
    </source>
</reference>
<accession>Q8TYW8</accession>
<comment type="function">
    <text evidence="1">IGPS catalyzes the conversion of PRFAR and glutamine to IGP, AICAR and glutamate. The HisF subunit catalyzes the cyclization activity that produces IGP and AICAR from PRFAR using the ammonia provided by the HisH subunit.</text>
</comment>
<comment type="catalytic activity">
    <reaction evidence="1">
        <text>5-[(5-phospho-1-deoxy-D-ribulos-1-ylimino)methylamino]-1-(5-phospho-beta-D-ribosyl)imidazole-4-carboxamide + L-glutamine = D-erythro-1-(imidazol-4-yl)glycerol 3-phosphate + 5-amino-1-(5-phospho-beta-D-ribosyl)imidazole-4-carboxamide + L-glutamate + H(+)</text>
        <dbReference type="Rhea" id="RHEA:24793"/>
        <dbReference type="ChEBI" id="CHEBI:15378"/>
        <dbReference type="ChEBI" id="CHEBI:29985"/>
        <dbReference type="ChEBI" id="CHEBI:58278"/>
        <dbReference type="ChEBI" id="CHEBI:58359"/>
        <dbReference type="ChEBI" id="CHEBI:58475"/>
        <dbReference type="ChEBI" id="CHEBI:58525"/>
        <dbReference type="EC" id="4.3.2.10"/>
    </reaction>
</comment>
<comment type="pathway">
    <text evidence="1">Amino-acid biosynthesis; L-histidine biosynthesis; L-histidine from 5-phospho-alpha-D-ribose 1-diphosphate: step 5/9.</text>
</comment>
<comment type="subunit">
    <text evidence="1">Heterodimer of HisH and HisF.</text>
</comment>
<comment type="subcellular location">
    <subcellularLocation>
        <location evidence="1">Cytoplasm</location>
    </subcellularLocation>
</comment>
<comment type="similarity">
    <text evidence="1">Belongs to the HisA/HisF family.</text>
</comment>
<organism>
    <name type="scientific">Methanopyrus kandleri (strain AV19 / DSM 6324 / JCM 9639 / NBRC 100938)</name>
    <dbReference type="NCBI Taxonomy" id="190192"/>
    <lineage>
        <taxon>Archaea</taxon>
        <taxon>Methanobacteriati</taxon>
        <taxon>Methanobacteriota</taxon>
        <taxon>Methanomada group</taxon>
        <taxon>Methanopyri</taxon>
        <taxon>Methanopyrales</taxon>
        <taxon>Methanopyraceae</taxon>
        <taxon>Methanopyrus</taxon>
    </lineage>
</organism>
<keyword id="KW-0028">Amino-acid biosynthesis</keyword>
<keyword id="KW-0963">Cytoplasm</keyword>
<keyword id="KW-0368">Histidine biosynthesis</keyword>
<keyword id="KW-0456">Lyase</keyword>
<keyword id="KW-1185">Reference proteome</keyword>
<proteinExistence type="inferred from homology"/>
<gene>
    <name evidence="1" type="primary">hisF</name>
    <name type="ordered locus">MK0173</name>
</gene>